<proteinExistence type="inferred from homology"/>
<keyword id="KW-0997">Cell inner membrane</keyword>
<keyword id="KW-1003">Cell membrane</keyword>
<keyword id="KW-0406">Ion transport</keyword>
<keyword id="KW-0472">Membrane</keyword>
<keyword id="KW-0630">Potassium</keyword>
<keyword id="KW-0633">Potassium transport</keyword>
<keyword id="KW-0812">Transmembrane</keyword>
<keyword id="KW-1133">Transmembrane helix</keyword>
<keyword id="KW-0813">Transport</keyword>
<gene>
    <name evidence="1" type="primary">kdpA</name>
    <name type="ordered locus">EcSMS35_0720</name>
</gene>
<protein>
    <recommendedName>
        <fullName evidence="1">Potassium-transporting ATPase potassium-binding subunit</fullName>
    </recommendedName>
    <alternativeName>
        <fullName evidence="1">ATP phosphohydrolase [potassium-transporting] A chain</fullName>
    </alternativeName>
    <alternativeName>
        <fullName evidence="1">Potassium-binding and translocating subunit A</fullName>
    </alternativeName>
    <alternativeName>
        <fullName evidence="1">Potassium-translocating ATPase A chain</fullName>
    </alternativeName>
</protein>
<dbReference type="EMBL" id="CP000970">
    <property type="protein sequence ID" value="ACB17694.1"/>
    <property type="molecule type" value="Genomic_DNA"/>
</dbReference>
<dbReference type="RefSeq" id="WP_000741158.1">
    <property type="nucleotide sequence ID" value="NC_010498.1"/>
</dbReference>
<dbReference type="SMR" id="B1LLE2"/>
<dbReference type="KEGG" id="ecm:EcSMS35_0720"/>
<dbReference type="HOGENOM" id="CLU_018614_3_0_6"/>
<dbReference type="Proteomes" id="UP000007011">
    <property type="component" value="Chromosome"/>
</dbReference>
<dbReference type="GO" id="GO:0005886">
    <property type="term" value="C:plasma membrane"/>
    <property type="evidence" value="ECO:0007669"/>
    <property type="project" value="UniProtKB-SubCell"/>
</dbReference>
<dbReference type="GO" id="GO:0008556">
    <property type="term" value="F:P-type potassium transmembrane transporter activity"/>
    <property type="evidence" value="ECO:0007669"/>
    <property type="project" value="InterPro"/>
</dbReference>
<dbReference type="GO" id="GO:0030955">
    <property type="term" value="F:potassium ion binding"/>
    <property type="evidence" value="ECO:0007669"/>
    <property type="project" value="UniProtKB-UniRule"/>
</dbReference>
<dbReference type="HAMAP" id="MF_00275">
    <property type="entry name" value="KdpA"/>
    <property type="match status" value="1"/>
</dbReference>
<dbReference type="InterPro" id="IPR004623">
    <property type="entry name" value="KdpA"/>
</dbReference>
<dbReference type="NCBIfam" id="TIGR00680">
    <property type="entry name" value="kdpA"/>
    <property type="match status" value="1"/>
</dbReference>
<dbReference type="PANTHER" id="PTHR30607">
    <property type="entry name" value="POTASSIUM-TRANSPORTING ATPASE A CHAIN"/>
    <property type="match status" value="1"/>
</dbReference>
<dbReference type="PANTHER" id="PTHR30607:SF2">
    <property type="entry name" value="POTASSIUM-TRANSPORTING ATPASE POTASSIUM-BINDING SUBUNIT"/>
    <property type="match status" value="1"/>
</dbReference>
<dbReference type="Pfam" id="PF03814">
    <property type="entry name" value="KdpA"/>
    <property type="match status" value="1"/>
</dbReference>
<dbReference type="PIRSF" id="PIRSF001294">
    <property type="entry name" value="K_ATPaseA"/>
    <property type="match status" value="1"/>
</dbReference>
<reference key="1">
    <citation type="journal article" date="2008" name="J. Bacteriol.">
        <title>Insights into the environmental resistance gene pool from the genome sequence of the multidrug-resistant environmental isolate Escherichia coli SMS-3-5.</title>
        <authorList>
            <person name="Fricke W.F."/>
            <person name="Wright M.S."/>
            <person name="Lindell A.H."/>
            <person name="Harkins D.M."/>
            <person name="Baker-Austin C."/>
            <person name="Ravel J."/>
            <person name="Stepanauskas R."/>
        </authorList>
    </citation>
    <scope>NUCLEOTIDE SEQUENCE [LARGE SCALE GENOMIC DNA]</scope>
    <source>
        <strain>SMS-3-5 / SECEC</strain>
    </source>
</reference>
<comment type="function">
    <text evidence="1">Part of the high-affinity ATP-driven potassium transport (or Kdp) system, which catalyzes the hydrolysis of ATP coupled with the electrogenic transport of potassium into the cytoplasm. This subunit binds the periplasmic potassium ions and delivers the ions to the membrane domain of KdpB through an intramembrane tunnel.</text>
</comment>
<comment type="subunit">
    <text evidence="1">The system is composed of three essential subunits: KdpA, KdpB and KdpC.</text>
</comment>
<comment type="subcellular location">
    <subcellularLocation>
        <location evidence="1">Cell inner membrane</location>
        <topology evidence="1">Multi-pass membrane protein</topology>
    </subcellularLocation>
</comment>
<comment type="similarity">
    <text evidence="1">Belongs to the KdpA family.</text>
</comment>
<name>KDPA_ECOSM</name>
<organism>
    <name type="scientific">Escherichia coli (strain SMS-3-5 / SECEC)</name>
    <dbReference type="NCBI Taxonomy" id="439855"/>
    <lineage>
        <taxon>Bacteria</taxon>
        <taxon>Pseudomonadati</taxon>
        <taxon>Pseudomonadota</taxon>
        <taxon>Gammaproteobacteria</taxon>
        <taxon>Enterobacterales</taxon>
        <taxon>Enterobacteriaceae</taxon>
        <taxon>Escherichia</taxon>
    </lineage>
</organism>
<sequence>MAAQGFLLIATFLLVLMVLARPLGSGLARLINDIPLPGTTGVERVLFSALGVSDREMNWKQYLSAILGLNMLGLAVLFFMLLGQHYLPLNPQQLPGLSWDLALNTAVSFVTNTNWQSYSGETTLSYFSQMAGLTVQNFLSAASGIAVIFAFIRAFTRQSMSTLGNAWVDLLRITLWVLVPVALLIALFFIQQGALQNFLPYQAVNTVEGAKQLLPMGPVASQEAIKMLGTNGGGFFNANSSHPFENPTTLTNFVQMLAIFLIPTALCFAFGEVAGDRRQGRMLLWAMSVIFVICVGVVMWAEVQGNPHLLALGADSSINMEGKESRFGVLVSSLFAVVTTAASCGAVIAMHDSFTALGGMVPMWLMQIGEVVFGGVGSGLYGMMLFVLLAVFIAGLMIGRTPEYLGKKIDVREMKLTALAILVTPTLVLMGAALAMMTDAGRSAMLNPGPHGFSEVLYAVSSAANNNGSAFAGLSANSPFWNCLLAFCMFVGRFGVIIPVMAIAGSLVSKKSQPASSGTLPTHGPLFVGLLIGTVLLVGALTFIPALALGPVAEYLS</sequence>
<feature type="chain" id="PRO_1000119339" description="Potassium-transporting ATPase potassium-binding subunit">
    <location>
        <begin position="1"/>
        <end position="557"/>
    </location>
</feature>
<feature type="transmembrane region" description="Helical" evidence="1">
    <location>
        <begin position="5"/>
        <end position="25"/>
    </location>
</feature>
<feature type="transmembrane region" description="Helical" evidence="1">
    <location>
        <begin position="63"/>
        <end position="83"/>
    </location>
</feature>
<feature type="transmembrane region" description="Helical" evidence="1">
    <location>
        <begin position="132"/>
        <end position="152"/>
    </location>
</feature>
<feature type="transmembrane region" description="Helical" evidence="1">
    <location>
        <begin position="170"/>
        <end position="190"/>
    </location>
</feature>
<feature type="transmembrane region" description="Helical" evidence="1">
    <location>
        <begin position="253"/>
        <end position="273"/>
    </location>
</feature>
<feature type="transmembrane region" description="Helical" evidence="1">
    <location>
        <begin position="283"/>
        <end position="303"/>
    </location>
</feature>
<feature type="transmembrane region" description="Helical" evidence="1">
    <location>
        <begin position="329"/>
        <end position="349"/>
    </location>
</feature>
<feature type="transmembrane region" description="Helical" evidence="1">
    <location>
        <begin position="356"/>
        <end position="376"/>
    </location>
</feature>
<feature type="transmembrane region" description="Helical" evidence="1">
    <location>
        <begin position="379"/>
        <end position="399"/>
    </location>
</feature>
<feature type="transmembrane region" description="Helical" evidence="1">
    <location>
        <begin position="416"/>
        <end position="436"/>
    </location>
</feature>
<feature type="transmembrane region" description="Helical" evidence="1">
    <location>
        <begin position="484"/>
        <end position="504"/>
    </location>
</feature>
<feature type="transmembrane region" description="Helical" evidence="1">
    <location>
        <begin position="526"/>
        <end position="546"/>
    </location>
</feature>
<accession>B1LLE2</accession>
<evidence type="ECO:0000255" key="1">
    <source>
        <dbReference type="HAMAP-Rule" id="MF_00275"/>
    </source>
</evidence>